<gene>
    <name type="primary">Gtf2i</name>
    <name type="synonym">Bap135</name>
    <name type="synonym">Diws1t</name>
</gene>
<name>GTF2I_MOUSE</name>
<sequence>MAQVVMSALPAEDEESSESRMVVTFLMSALESMCKELAKSKAEVACIAVYETDVFVVGTERGRAFVNTRKDFQKDFVKYCVEEEEKAAEMHKMKSTTQANRMSVDAVEIETLRKTVEDYFCFCYGKALGKSTVVPVPYEKMLRDQSAVVVQGLPEGVAFKHPEHYDLATLKWILENKAGISFIIKRPFLEPKKHLGGRVLAAEAERSMLSPSGSCGPIKVKTEPTEDSGISLEMAAVTVKEESEDPDYYQYNIQGPSETDGVDEKLPLSKALQGSHHSSEGNEGTEVEVPAEDSTQHVPSETSEDPEVEVTIEDDDYSPPTKRLKSTEPPPPPPVPEPANAGKRKVREFNFEKWNARITDLRKQVEELFERKYAQAIKAKGPVTIPYPLFQSHVEDLYVEGLPEGIPFRRPSTYGIPRLERILLAKERIRFVIKKHELLNSTREDLQLDKPASGVKEEWYARITKLRKMVDQLFCKKFAEALGSTEAKAVPYQKFEAHPNDLYVEGLPENIPFRSPSWYGIPRLEKIIQVGNRIKFVIKRPELLTHSTTEVTQPRTNTPVKEDWNVRITKLRKQVEEIFNLKFAQALGLTEAVKVPYPVFESNPEFLYVEGLPEGIPFRSPTWFGIPRLERIVRGSNKIKFVVKKPELVVSYLPPGMASKINTKALQSPKRPRSPGSNSKVPEIEVTVEGPNNSSPQTSAVRTPTQTNGSNVPFKPRGREFSFEAWNAKITDLKQKVENLFNEKCGEALGLKQAVKVPFALFESFPEDFYVEGLPEGVPFRRPSTFGIPRLEKILRNKAKIKFIIKKPEMFETAIKESTSSKSPPRKINSSPNVNTTASGVEDLNIIQVTIPDDDNERLSKVEKARQLREQVNDLFSRKFGEAIGMGFPVKVPYRKITINPGCVVVDGMPPGVSFKAPSYLEISSMRRILDSAEFIKFTVIRPFPGLVINNQLVDQNESEGPVIQESAEASQLEVPVTEEIKETDGSSQIKQEPDPTW</sequence>
<organism>
    <name type="scientific">Mus musculus</name>
    <name type="common">Mouse</name>
    <dbReference type="NCBI Taxonomy" id="10090"/>
    <lineage>
        <taxon>Eukaryota</taxon>
        <taxon>Metazoa</taxon>
        <taxon>Chordata</taxon>
        <taxon>Craniata</taxon>
        <taxon>Vertebrata</taxon>
        <taxon>Euteleostomi</taxon>
        <taxon>Mammalia</taxon>
        <taxon>Eutheria</taxon>
        <taxon>Euarchontoglires</taxon>
        <taxon>Glires</taxon>
        <taxon>Rodentia</taxon>
        <taxon>Myomorpha</taxon>
        <taxon>Muroidea</taxon>
        <taxon>Muridae</taxon>
        <taxon>Murinae</taxon>
        <taxon>Mus</taxon>
        <taxon>Mus</taxon>
    </lineage>
</organism>
<accession>Q9ESZ8</accession>
<accession>O54700</accession>
<accession>O55030</accession>
<accession>O55031</accession>
<accession>Q8VHD1</accession>
<accession>Q8VHD2</accession>
<accession>Q8VHD3</accession>
<accession>Q8VHD4</accession>
<accession>Q9CSB5</accession>
<accession>Q9D9K9</accession>
<proteinExistence type="evidence at protein level"/>
<protein>
    <recommendedName>
        <fullName>General transcription factor II-I</fullName>
        <shortName>GTFII-I</shortName>
        <shortName>TFII-I</shortName>
    </recommendedName>
    <alternativeName>
        <fullName>Bruton tyrosine kinase-associated protein 135</fullName>
        <shortName>BAP-135</shortName>
        <shortName>BTK-associated protein 135</shortName>
    </alternativeName>
</protein>
<reference key="1">
    <citation type="journal article" date="1998" name="Genomics">
        <title>A mouse single-copy gene, Gtf2i, the homolog of human GTF2I, that is duplicated in the Williams-Beuren syndrome deletion region.</title>
        <authorList>
            <person name="Wang Y.-K."/>
            <person name="Perez-Jurado L.A."/>
            <person name="Francke U."/>
        </authorList>
    </citation>
    <scope>NUCLEOTIDE SEQUENCE [MRNA] (ISOFORMS 1; 2; 3; 4 AND 5)</scope>
    <source>
        <tissue>Brain</tissue>
    </source>
</reference>
<reference key="2">
    <citation type="submission" date="1998-01" db="EMBL/GenBank/DDBJ databases">
        <title>Cloning and expression of two forms of mouse TFII-I.</title>
        <authorList>
            <person name="Johansson E."/>
            <person name="Hjortsberg K."/>
            <person name="Roy A.L."/>
            <person name="Thelander L."/>
        </authorList>
    </citation>
    <scope>NUCLEOTIDE SEQUENCE [MRNA] (ISOFORMS 2 AND 4)</scope>
    <source>
        <strain>C57BL/Kaplan</strain>
        <tissue>T-cell lymphoma</tissue>
    </source>
</reference>
<reference key="3">
    <citation type="journal article" date="2002" name="Genomics">
        <title>Genomic organization of the genes Gtf2ird1, Gtf2i, and Ncf1 at the mouse chromosome 5 region syntenic to the human chromosome 7q11.23 Williams syndrome critical region.</title>
        <authorList>
            <person name="Bayarsaihan D."/>
            <person name="Dunai J."/>
            <person name="Greally J.M."/>
            <person name="Kawasaki K."/>
            <person name="Sumiyama K."/>
            <person name="Enkhmandakh B."/>
            <person name="Shimizu N."/>
            <person name="Ruddle F.H."/>
        </authorList>
    </citation>
    <scope>NUCLEOTIDE SEQUENCE [GENOMIC DNA / MRNA] (ISOFORMS 1; 2; 4 AND 6)</scope>
    <source>
        <strain>129/SvJ</strain>
    </source>
</reference>
<reference key="4">
    <citation type="journal article" date="2004" name="Genome Res.">
        <title>The status, quality, and expansion of the NIH full-length cDNA project: the Mammalian Gene Collection (MGC).</title>
        <authorList>
            <consortium name="The MGC Project Team"/>
        </authorList>
    </citation>
    <scope>NUCLEOTIDE SEQUENCE [LARGE SCALE MRNA] (ISOFORM 1)</scope>
    <source>
        <strain>C57BL/6J</strain>
        <tissue>Brain</tissue>
    </source>
</reference>
<reference key="5">
    <citation type="journal article" date="2005" name="Science">
        <title>The transcriptional landscape of the mammalian genome.</title>
        <authorList>
            <person name="Carninci P."/>
            <person name="Kasukawa T."/>
            <person name="Katayama S."/>
            <person name="Gough J."/>
            <person name="Frith M.C."/>
            <person name="Maeda N."/>
            <person name="Oyama R."/>
            <person name="Ravasi T."/>
            <person name="Lenhard B."/>
            <person name="Wells C."/>
            <person name="Kodzius R."/>
            <person name="Shimokawa K."/>
            <person name="Bajic V.B."/>
            <person name="Brenner S.E."/>
            <person name="Batalov S."/>
            <person name="Forrest A.R."/>
            <person name="Zavolan M."/>
            <person name="Davis M.J."/>
            <person name="Wilming L.G."/>
            <person name="Aidinis V."/>
            <person name="Allen J.E."/>
            <person name="Ambesi-Impiombato A."/>
            <person name="Apweiler R."/>
            <person name="Aturaliya R.N."/>
            <person name="Bailey T.L."/>
            <person name="Bansal M."/>
            <person name="Baxter L."/>
            <person name="Beisel K.W."/>
            <person name="Bersano T."/>
            <person name="Bono H."/>
            <person name="Chalk A.M."/>
            <person name="Chiu K.P."/>
            <person name="Choudhary V."/>
            <person name="Christoffels A."/>
            <person name="Clutterbuck D.R."/>
            <person name="Crowe M.L."/>
            <person name="Dalla E."/>
            <person name="Dalrymple B.P."/>
            <person name="de Bono B."/>
            <person name="Della Gatta G."/>
            <person name="di Bernardo D."/>
            <person name="Down T."/>
            <person name="Engstrom P."/>
            <person name="Fagiolini M."/>
            <person name="Faulkner G."/>
            <person name="Fletcher C.F."/>
            <person name="Fukushima T."/>
            <person name="Furuno M."/>
            <person name="Futaki S."/>
            <person name="Gariboldi M."/>
            <person name="Georgii-Hemming P."/>
            <person name="Gingeras T.R."/>
            <person name="Gojobori T."/>
            <person name="Green R.E."/>
            <person name="Gustincich S."/>
            <person name="Harbers M."/>
            <person name="Hayashi Y."/>
            <person name="Hensch T.K."/>
            <person name="Hirokawa N."/>
            <person name="Hill D."/>
            <person name="Huminiecki L."/>
            <person name="Iacono M."/>
            <person name="Ikeo K."/>
            <person name="Iwama A."/>
            <person name="Ishikawa T."/>
            <person name="Jakt M."/>
            <person name="Kanapin A."/>
            <person name="Katoh M."/>
            <person name="Kawasawa Y."/>
            <person name="Kelso J."/>
            <person name="Kitamura H."/>
            <person name="Kitano H."/>
            <person name="Kollias G."/>
            <person name="Krishnan S.P."/>
            <person name="Kruger A."/>
            <person name="Kummerfeld S.K."/>
            <person name="Kurochkin I.V."/>
            <person name="Lareau L.F."/>
            <person name="Lazarevic D."/>
            <person name="Lipovich L."/>
            <person name="Liu J."/>
            <person name="Liuni S."/>
            <person name="McWilliam S."/>
            <person name="Madan Babu M."/>
            <person name="Madera M."/>
            <person name="Marchionni L."/>
            <person name="Matsuda H."/>
            <person name="Matsuzawa S."/>
            <person name="Miki H."/>
            <person name="Mignone F."/>
            <person name="Miyake S."/>
            <person name="Morris K."/>
            <person name="Mottagui-Tabar S."/>
            <person name="Mulder N."/>
            <person name="Nakano N."/>
            <person name="Nakauchi H."/>
            <person name="Ng P."/>
            <person name="Nilsson R."/>
            <person name="Nishiguchi S."/>
            <person name="Nishikawa S."/>
            <person name="Nori F."/>
            <person name="Ohara O."/>
            <person name="Okazaki Y."/>
            <person name="Orlando V."/>
            <person name="Pang K.C."/>
            <person name="Pavan W.J."/>
            <person name="Pavesi G."/>
            <person name="Pesole G."/>
            <person name="Petrovsky N."/>
            <person name="Piazza S."/>
            <person name="Reed J."/>
            <person name="Reid J.F."/>
            <person name="Ring B.Z."/>
            <person name="Ringwald M."/>
            <person name="Rost B."/>
            <person name="Ruan Y."/>
            <person name="Salzberg S.L."/>
            <person name="Sandelin A."/>
            <person name="Schneider C."/>
            <person name="Schoenbach C."/>
            <person name="Sekiguchi K."/>
            <person name="Semple C.A."/>
            <person name="Seno S."/>
            <person name="Sessa L."/>
            <person name="Sheng Y."/>
            <person name="Shibata Y."/>
            <person name="Shimada H."/>
            <person name="Shimada K."/>
            <person name="Silva D."/>
            <person name="Sinclair B."/>
            <person name="Sperling S."/>
            <person name="Stupka E."/>
            <person name="Sugiura K."/>
            <person name="Sultana R."/>
            <person name="Takenaka Y."/>
            <person name="Taki K."/>
            <person name="Tammoja K."/>
            <person name="Tan S.L."/>
            <person name="Tang S."/>
            <person name="Taylor M.S."/>
            <person name="Tegner J."/>
            <person name="Teichmann S.A."/>
            <person name="Ueda H.R."/>
            <person name="van Nimwegen E."/>
            <person name="Verardo R."/>
            <person name="Wei C.L."/>
            <person name="Yagi K."/>
            <person name="Yamanishi H."/>
            <person name="Zabarovsky E."/>
            <person name="Zhu S."/>
            <person name="Zimmer A."/>
            <person name="Hide W."/>
            <person name="Bult C."/>
            <person name="Grimmond S.M."/>
            <person name="Teasdale R.D."/>
            <person name="Liu E.T."/>
            <person name="Brusic V."/>
            <person name="Quackenbush J."/>
            <person name="Wahlestedt C."/>
            <person name="Mattick J.S."/>
            <person name="Hume D.A."/>
            <person name="Kai C."/>
            <person name="Sasaki D."/>
            <person name="Tomaru Y."/>
            <person name="Fukuda S."/>
            <person name="Kanamori-Katayama M."/>
            <person name="Suzuki M."/>
            <person name="Aoki J."/>
            <person name="Arakawa T."/>
            <person name="Iida J."/>
            <person name="Imamura K."/>
            <person name="Itoh M."/>
            <person name="Kato T."/>
            <person name="Kawaji H."/>
            <person name="Kawagashira N."/>
            <person name="Kawashima T."/>
            <person name="Kojima M."/>
            <person name="Kondo S."/>
            <person name="Konno H."/>
            <person name="Nakano K."/>
            <person name="Ninomiya N."/>
            <person name="Nishio T."/>
            <person name="Okada M."/>
            <person name="Plessy C."/>
            <person name="Shibata K."/>
            <person name="Shiraki T."/>
            <person name="Suzuki S."/>
            <person name="Tagami M."/>
            <person name="Waki K."/>
            <person name="Watahiki A."/>
            <person name="Okamura-Oho Y."/>
            <person name="Suzuki H."/>
            <person name="Kawai J."/>
            <person name="Hayashizaki Y."/>
        </authorList>
    </citation>
    <scope>NUCLEOTIDE SEQUENCE [LARGE SCALE MRNA] OF 1-130 AND 719-998</scope>
    <source>
        <strain>C57BL/6J</strain>
        <tissue>Embryo</tissue>
        <tissue>Testis</tissue>
    </source>
</reference>
<reference key="6">
    <citation type="submission" date="2000-07" db="EMBL/GenBank/DDBJ databases">
        <authorList>
            <person name="Green E.D."/>
        </authorList>
    </citation>
    <scope>NUCLEOTIDE SEQUENCE OF 1-314 (ISOFORM 2)</scope>
    <source>
        <strain>129/Sv</strain>
    </source>
</reference>
<reference key="7">
    <citation type="journal article" date="2006" name="Mol. Cell. Biol.">
        <title>Induction of immunoglobulin heavy-chain transcription through the transcription factor Bright requires TFII-I.</title>
        <authorList>
            <person name="Rajaiya J."/>
            <person name="Nixon J.C."/>
            <person name="Ayers N."/>
            <person name="Desgranges Z.P."/>
            <person name="Roy A.L."/>
            <person name="Webb C.F."/>
        </authorList>
    </citation>
    <scope>INTERACTION WITH ARID3A AND BTK</scope>
    <scope>FUNCTION</scope>
</reference>
<reference key="8">
    <citation type="journal article" date="2010" name="Cell">
        <title>A tissue-specific atlas of mouse protein phosphorylation and expression.</title>
        <authorList>
            <person name="Huttlin E.L."/>
            <person name="Jedrychowski M.P."/>
            <person name="Elias J.E."/>
            <person name="Goswami T."/>
            <person name="Rad R."/>
            <person name="Beausoleil S.A."/>
            <person name="Villen J."/>
            <person name="Haas W."/>
            <person name="Sowa M.E."/>
            <person name="Gygi S.P."/>
        </authorList>
    </citation>
    <scope>PHOSPHORYLATION [LARGE SCALE ANALYSIS] AT THR-556 AND THR-558</scope>
    <scope>IDENTIFICATION BY MASS SPECTROMETRY [LARGE SCALE ANALYSIS]</scope>
    <source>
        <tissue>Brain</tissue>
        <tissue>Heart</tissue>
        <tissue>Kidney</tissue>
        <tissue>Liver</tissue>
        <tissue>Lung</tissue>
        <tissue>Pancreas</tissue>
        <tissue>Spleen</tissue>
        <tissue>Testis</tissue>
    </source>
</reference>
<reference key="9">
    <citation type="journal article" date="2013" name="Mol. Cell">
        <title>SIRT5-mediated lysine desuccinylation impacts diverse metabolic pathways.</title>
        <authorList>
            <person name="Park J."/>
            <person name="Chen Y."/>
            <person name="Tishkoff D.X."/>
            <person name="Peng C."/>
            <person name="Tan M."/>
            <person name="Dai L."/>
            <person name="Xie Z."/>
            <person name="Zhang Y."/>
            <person name="Zwaans B.M."/>
            <person name="Skinner M.E."/>
            <person name="Lombard D.B."/>
            <person name="Zhao Y."/>
        </authorList>
    </citation>
    <scope>ACETYLATION [LARGE SCALE ANALYSIS] AT LYS-130; LYS-353; LYS-450 AND LYS-715</scope>
    <scope>IDENTIFICATION BY MASS SPECTROMETRY [LARGE SCALE ANALYSIS]</scope>
    <source>
        <tissue>Embryonic fibroblast</tissue>
    </source>
</reference>
<reference key="10">
    <citation type="journal article" date="2007" name="Protein Sci.">
        <title>Solution structure of the general transcription factor 2I domain in mouse TFII-I protein.</title>
        <authorList>
            <person name="Doi-Katayama Y."/>
            <person name="Hayashi F."/>
            <person name="Inoue M."/>
            <person name="Yabuki T."/>
            <person name="Aoki M."/>
            <person name="Seki E."/>
            <person name="Matsuda T."/>
            <person name="Kigawa T."/>
            <person name="Yoshida M."/>
            <person name="Shirouzu M."/>
            <person name="Terada T."/>
            <person name="Hayashizaki Y."/>
            <person name="Yokoyama S."/>
            <person name="Hirota H."/>
        </authorList>
    </citation>
    <scope>STRUCTURE BY NMR OF 733-818</scope>
</reference>
<keyword id="KW-0002">3D-structure</keyword>
<keyword id="KW-0007">Acetylation</keyword>
<keyword id="KW-0025">Alternative splicing</keyword>
<keyword id="KW-0963">Cytoplasm</keyword>
<keyword id="KW-0238">DNA-binding</keyword>
<keyword id="KW-1017">Isopeptide bond</keyword>
<keyword id="KW-0539">Nucleus</keyword>
<keyword id="KW-0597">Phosphoprotein</keyword>
<keyword id="KW-1185">Reference proteome</keyword>
<keyword id="KW-0677">Repeat</keyword>
<keyword id="KW-0804">Transcription</keyword>
<keyword id="KW-0805">Transcription regulation</keyword>
<keyword id="KW-0832">Ubl conjugation</keyword>
<evidence type="ECO:0000250" key="1"/>
<evidence type="ECO:0000250" key="2">
    <source>
        <dbReference type="UniProtKB" id="P78347"/>
    </source>
</evidence>
<evidence type="ECO:0000255" key="3"/>
<evidence type="ECO:0000255" key="4">
    <source>
        <dbReference type="PROSITE-ProRule" id="PRU00484"/>
    </source>
</evidence>
<evidence type="ECO:0000256" key="5">
    <source>
        <dbReference type="SAM" id="MobiDB-lite"/>
    </source>
</evidence>
<evidence type="ECO:0000269" key="6">
    <source>
    </source>
</evidence>
<evidence type="ECO:0000303" key="7">
    <source>
    </source>
</evidence>
<evidence type="ECO:0000303" key="8">
    <source>
    </source>
</evidence>
<evidence type="ECO:0000303" key="9">
    <source ref="2"/>
</evidence>
<evidence type="ECO:0000305" key="10"/>
<evidence type="ECO:0007744" key="11">
    <source>
    </source>
</evidence>
<evidence type="ECO:0007744" key="12">
    <source>
    </source>
</evidence>
<evidence type="ECO:0007829" key="13">
    <source>
        <dbReference type="PDB" id="1Q60"/>
    </source>
</evidence>
<comment type="function">
    <text evidence="1 6">Interacts with the basal transcription machinery by coordinating the formation of a multiprotein complex at the C-FOS promoter, and linking specific signal responsive activator complexes. Promotes the formation of stable high-order complexes of SRF and PHOX1 and interacts cooperatively with PHOX1 to promote serum-inducible transcription of a reporter gene deriven by the C-FOS serum response element (SRE). Acts as a coregulator for USF1 by binding independently two promoter elements, a pyrimidine-rich initiator (Inr) and an upstream E-box (By similarity). Required for the formation of functional ARID3A DNA-binding complexes and for activation of immunoglobulin heavy-chain transcription upon B-lymphocyte activation.</text>
</comment>
<comment type="subunit">
    <text evidence="1 10">Homodimer (Potential). Interacts with SRF and PHOX1. Binds a pyrimidine-rich initiator (Inr) and a recognition site (E-box) for upstream stimulatory factor 1 (USF1). Associates with the PH domain of Bruton's tyrosine kinase (BTK) (By similarity). May be a component of a BHC histone deacetylase complex that contains HDAC1, HDAC2, HMG20B/BRAF35, KDM1A, RCOR1/CoREST, PHF21A/BHC80, ZMYM2, ZNF217, ZMYM3, GSE1 and GTF2I. Interacts with BTK and ARID3A. Interacts with isoform beta of PRKG1 (By similarity).</text>
</comment>
<comment type="subcellular location">
    <subcellularLocation>
        <location>Cytoplasm</location>
    </subcellularLocation>
    <subcellularLocation>
        <location>Nucleus</location>
    </subcellularLocation>
    <text evidence="1">Colocalizes with BTK in the cytoplasm.</text>
</comment>
<comment type="alternative products">
    <event type="alternative splicing"/>
    <isoform>
        <id>Q9ESZ8-1</id>
        <name>1</name>
        <name>Gamma</name>
        <sequence type="displayed"/>
    </isoform>
    <isoform>
        <id>Q9ESZ8-2</id>
        <name>2</name>
        <name>Beta</name>
        <name>Long</name>
        <sequence type="described" ref="VSP_003869"/>
    </isoform>
    <isoform>
        <id>Q9ESZ8-3</id>
        <name>3</name>
        <sequence type="described" ref="VSP_003870"/>
    </isoform>
    <isoform>
        <id>Q9ESZ8-4</id>
        <name>4</name>
        <name>Delta</name>
        <name>Short</name>
        <sequence type="described" ref="VSP_003869 VSP_003872"/>
    </isoform>
    <isoform>
        <id>Q9ESZ8-5</id>
        <name>5</name>
        <sequence type="described" ref="VSP_003871"/>
    </isoform>
    <isoform>
        <id>Q9ESZ8-6</id>
        <name>6</name>
        <name>Alpha</name>
        <sequence type="described" ref="VSP_003872"/>
    </isoform>
</comment>
<comment type="tissue specificity">
    <text>Ubiquitous.</text>
</comment>
<comment type="PTM">
    <text evidence="1">Transiently phosphorylated on tyrosine residues by BTK in response to B-cell receptor stimulation. Phosphorylation on Tyr-248 and Tyr-398, and perhaps, on Tyr-503 contributes to BTK-mediated transcriptional activation (By similarity).</text>
</comment>
<comment type="PTM">
    <text evidence="1">Sumoylated.</text>
</comment>
<comment type="similarity">
    <text evidence="4">Belongs to the TFII-I family.</text>
</comment>
<comment type="sequence caution" evidence="10">
    <conflict type="erroneous initiation">
        <sequence resource="EMBL-CDS" id="BAB28803"/>
    </conflict>
</comment>
<feature type="initiator methionine" description="Removed" evidence="2">
    <location>
        <position position="1"/>
    </location>
</feature>
<feature type="chain" id="PRO_0000083873" description="General transcription factor II-I">
    <location>
        <begin position="2"/>
        <end position="998"/>
    </location>
</feature>
<feature type="repeat" description="GTF2I-like 1">
    <location>
        <begin position="103"/>
        <end position="197"/>
    </location>
</feature>
<feature type="repeat" description="GTF2I-like 2">
    <location>
        <begin position="352"/>
        <end position="446"/>
    </location>
</feature>
<feature type="repeat" description="GTF2I-like 3">
    <location>
        <begin position="457"/>
        <end position="551"/>
    </location>
</feature>
<feature type="repeat" description="GTF2I-like 4">
    <location>
        <begin position="562"/>
        <end position="656"/>
    </location>
</feature>
<feature type="repeat" description="GTF2I-like 5">
    <location>
        <begin position="724"/>
        <end position="818"/>
    </location>
</feature>
<feature type="repeat" description="GTF2I-like 6">
    <location>
        <begin position="859"/>
        <end position="953"/>
    </location>
</feature>
<feature type="region of interest" description="Disordered" evidence="5">
    <location>
        <begin position="241"/>
        <end position="341"/>
    </location>
</feature>
<feature type="region of interest" description="Disordered" evidence="5">
    <location>
        <begin position="661"/>
        <end position="714"/>
    </location>
</feature>
<feature type="region of interest" description="Disordered" evidence="5">
    <location>
        <begin position="816"/>
        <end position="836"/>
    </location>
</feature>
<feature type="region of interest" description="Disordered" evidence="5">
    <location>
        <begin position="960"/>
        <end position="998"/>
    </location>
</feature>
<feature type="short sequence motif" description="Nuclear localization signal" evidence="3">
    <location>
        <begin position="319"/>
        <end position="326"/>
    </location>
</feature>
<feature type="compositionally biased region" description="Acidic residues" evidence="5">
    <location>
        <begin position="302"/>
        <end position="317"/>
    </location>
</feature>
<feature type="compositionally biased region" description="Pro residues" evidence="5">
    <location>
        <begin position="328"/>
        <end position="337"/>
    </location>
</feature>
<feature type="compositionally biased region" description="Polar residues" evidence="5">
    <location>
        <begin position="690"/>
        <end position="711"/>
    </location>
</feature>
<feature type="modified residue" description="N-acetylalanine" evidence="2">
    <location>
        <position position="2"/>
    </location>
</feature>
<feature type="modified residue" description="Phosphoserine" evidence="2">
    <location>
        <position position="19"/>
    </location>
</feature>
<feature type="modified residue" description="Phosphoserine" evidence="2">
    <location>
        <position position="103"/>
    </location>
</feature>
<feature type="modified residue" description="N6-acetyllysine; alternate" evidence="12">
    <location>
        <position position="130"/>
    </location>
</feature>
<feature type="modified residue" description="Phosphoserine" evidence="2">
    <location>
        <position position="207"/>
    </location>
</feature>
<feature type="modified residue" description="Phosphoserine" evidence="2">
    <location>
        <position position="210"/>
    </location>
</feature>
<feature type="modified residue" description="Phosphoserine" evidence="2">
    <location>
        <position position="214"/>
    </location>
</feature>
<feature type="modified residue" description="Phosphotyrosine; by BTK" evidence="2">
    <location>
        <position position="248"/>
    </location>
</feature>
<feature type="modified residue" description="N6-acetyllysine; alternate" evidence="12">
    <location>
        <position position="353"/>
    </location>
</feature>
<feature type="modified residue" description="Phosphotyrosine; by BTK" evidence="2">
    <location>
        <position position="398"/>
    </location>
</feature>
<feature type="modified residue" description="Phosphoserine; by PKG/PRKG1" evidence="2">
    <location>
        <position position="412"/>
    </location>
</feature>
<feature type="modified residue" description="N6-acetyllysine; alternate" evidence="12">
    <location>
        <position position="450"/>
    </location>
</feature>
<feature type="modified residue" description="Phosphotyrosine; by BTK" evidence="2">
    <location>
        <position position="503"/>
    </location>
</feature>
<feature type="modified residue" description="Phosphoserine" evidence="2">
    <location>
        <position position="517"/>
    </location>
</feature>
<feature type="modified residue" description="Phosphothreonine" evidence="11">
    <location>
        <position position="556"/>
    </location>
</feature>
<feature type="modified residue" description="Phosphothreonine" evidence="11">
    <location>
        <position position="558"/>
    </location>
</feature>
<feature type="modified residue" description="Phosphoserine" evidence="2">
    <location>
        <position position="668"/>
    </location>
</feature>
<feature type="modified residue" description="Phosphoserine" evidence="2">
    <location>
        <position position="674"/>
    </location>
</feature>
<feature type="modified residue" description="N6-acetyllysine; alternate" evidence="12">
    <location>
        <position position="715"/>
    </location>
</feature>
<feature type="modified residue" description="Phosphoserine" evidence="2">
    <location>
        <position position="722"/>
    </location>
</feature>
<feature type="modified residue" description="Phosphoserine; by PKG/PRKG1" evidence="2">
    <location>
        <position position="784"/>
    </location>
</feature>
<feature type="modified residue" description="Phosphoserine" evidence="2">
    <location>
        <position position="823"/>
    </location>
</feature>
<feature type="cross-link" description="Glycyl lysine isopeptide (Lys-Gly) (interchain with G-Cter in SUMO2)" evidence="2">
    <location>
        <position position="35"/>
    </location>
</feature>
<feature type="cross-link" description="Glycyl lysine isopeptide (Lys-Gly) (interchain with G-Cter in SUMO2)" evidence="2">
    <location>
        <position position="86"/>
    </location>
</feature>
<feature type="cross-link" description="Glycyl lysine isopeptide (Lys-Gly) (interchain with G-Cter in SUMO2)" evidence="2">
    <location>
        <position position="92"/>
    </location>
</feature>
<feature type="cross-link" description="Glycyl lysine isopeptide (Lys-Gly) (interchain with G-Cter in SUMO2)" evidence="2">
    <location>
        <position position="94"/>
    </location>
</feature>
<feature type="cross-link" description="Glycyl lysine isopeptide (Lys-Gly) (interchain with G-Cter in SUMO2); alternate" evidence="2">
    <location>
        <position position="130"/>
    </location>
</feature>
<feature type="cross-link" description="Glycyl lysine isopeptide (Lys-Gly) (interchain with G-Cter in SUMO2)" evidence="2">
    <location>
        <position position="140"/>
    </location>
</feature>
<feature type="cross-link" description="Glycyl lysine isopeptide (Lys-Gly) (interchain with G-Cter in SUMO2)" evidence="2">
    <location>
        <position position="185"/>
    </location>
</feature>
<feature type="cross-link" description="Glycyl lysine isopeptide (Lys-Gly) (interchain with G-Cter in SUMO2)" evidence="2">
    <location>
        <position position="219"/>
    </location>
</feature>
<feature type="cross-link" description="Glycyl lysine isopeptide (Lys-Gly) (interchain with G-Cter in SUMO1); alternate" evidence="2">
    <location>
        <position position="221"/>
    </location>
</feature>
<feature type="cross-link" description="Glycyl lysine isopeptide (Lys-Gly) (interchain with G-Cter in SUMO2); alternate" evidence="2">
    <location>
        <position position="221"/>
    </location>
</feature>
<feature type="cross-link" description="Glycyl lysine isopeptide (Lys-Gly) (interchain with G-Cter in SUMO2)" evidence="2">
    <location>
        <position position="325"/>
    </location>
</feature>
<feature type="cross-link" description="Glycyl lysine isopeptide (Lys-Gly) (interchain with G-Cter in SUMO2)" evidence="2">
    <location>
        <position position="343"/>
    </location>
</feature>
<feature type="cross-link" description="Glycyl lysine isopeptide (Lys-Gly) (interchain with G-Cter in SUMO2); alternate" evidence="2">
    <location>
        <position position="353"/>
    </location>
</feature>
<feature type="cross-link" description="Glycyl lysine isopeptide (Lys-Gly) (interchain with G-Cter in SUMO2)" evidence="2">
    <location>
        <position position="380"/>
    </location>
</feature>
<feature type="cross-link" description="Glycyl lysine isopeptide (Lys-Gly) (interchain with G-Cter in SUMO2)" evidence="2">
    <location>
        <position position="435"/>
    </location>
</feature>
<feature type="cross-link" description="Glycyl lysine isopeptide (Lys-Gly) (interchain with G-Cter in SUMO2); alternate" evidence="2">
    <location>
        <position position="450"/>
    </location>
</feature>
<feature type="cross-link" description="Glycyl lysine isopeptide (Lys-Gly) (interchain with G-Cter in SUMO2)" evidence="2">
    <location>
        <position position="456"/>
    </location>
</feature>
<feature type="cross-link" description="Glycyl lysine isopeptide (Lys-Gly) (interchain with G-Cter in SUMO2)" evidence="2">
    <location>
        <position position="488"/>
    </location>
</feature>
<feature type="cross-link" description="Glycyl lysine isopeptide (Lys-Gly) (interchain with G-Cter in SUMO2)" evidence="2">
    <location>
        <position position="494"/>
    </location>
</feature>
<feature type="cross-link" description="Glycyl lysine isopeptide (Lys-Gly) (interchain with G-Cter in SUMO2)" evidence="2">
    <location>
        <position position="526"/>
    </location>
</feature>
<feature type="cross-link" description="Glycyl lysine isopeptide (Lys-Gly) (interchain with G-Cter in SUMO2)" evidence="2">
    <location>
        <position position="561"/>
    </location>
</feature>
<feature type="cross-link" description="Glycyl lysine isopeptide (Lys-Gly) (interchain with G-Cter in SUMO2)" evidence="2">
    <location>
        <position position="660"/>
    </location>
</feature>
<feature type="cross-link" description="Glycyl lysine isopeptide (Lys-Gly) (interchain with G-Cter in SUMO2)" evidence="2">
    <location>
        <position position="664"/>
    </location>
</feature>
<feature type="cross-link" description="Glycyl lysine isopeptide (Lys-Gly) (interchain with G-Cter in SUMO2)" evidence="2">
    <location>
        <position position="670"/>
    </location>
</feature>
<feature type="cross-link" description="Glycyl lysine isopeptide (Lys-Gly) (interchain with G-Cter in SUMO2)" evidence="2">
    <location>
        <position position="680"/>
    </location>
</feature>
<feature type="cross-link" description="Glycyl lysine isopeptide (Lys-Gly) (interchain with G-Cter in SUMO2); alternate" evidence="2">
    <location>
        <position position="715"/>
    </location>
</feature>
<feature type="cross-link" description="Glycyl lysine isopeptide (Lys-Gly) (interchain with G-Cter in SUMO2)" evidence="2">
    <location>
        <position position="816"/>
    </location>
</feature>
<feature type="cross-link" description="Glycyl lysine isopeptide (Lys-Gly) (interchain with G-Cter in SUMO2)" evidence="2">
    <location>
        <position position="827"/>
    </location>
</feature>
<feature type="cross-link" description="Glycyl lysine isopeptide (Lys-Gly) (interchain with G-Cter in SUMO2)" evidence="2">
    <location>
        <position position="861"/>
    </location>
</feature>
<feature type="cross-link" description="Glycyl lysine isopeptide (Lys-Gly) (interchain with G-Cter in SUMO2)" evidence="2">
    <location>
        <position position="864"/>
    </location>
</feature>
<feature type="cross-link" description="Glycyl lysine isopeptide (Lys-Gly) (interchain with G-Cter in SUMO2)" evidence="2">
    <location>
        <position position="879"/>
    </location>
</feature>
<feature type="cross-link" description="Glycyl lysine isopeptide (Lys-Gly) (interchain with G-Cter in SUMO2)" evidence="2">
    <location>
        <position position="891"/>
    </location>
</feature>
<feature type="cross-link" description="Glycyl lysine isopeptide (Lys-Gly) (interchain with G-Cter in SUMO1); alternate" evidence="2">
    <location>
        <position position="991"/>
    </location>
</feature>
<feature type="cross-link" description="Glycyl lysine isopeptide (Lys-Gly) (interchain with G-Cter in SUMO2); alternate" evidence="2">
    <location>
        <position position="991"/>
    </location>
</feature>
<feature type="splice variant" id="VSP_003871" description="In isoform 5." evidence="8">
    <location>
        <begin position="255"/>
        <end position="313"/>
    </location>
</feature>
<feature type="splice variant" id="VSP_003870" description="In isoform 3." evidence="8">
    <location>
        <begin position="255"/>
        <end position="292"/>
    </location>
</feature>
<feature type="splice variant" id="VSP_003869" description="In isoform 2 and isoform 4." evidence="7 8 9">
    <location>
        <begin position="255"/>
        <end position="273"/>
    </location>
</feature>
<feature type="splice variant" id="VSP_003872" description="In isoform 4 and isoform 6." evidence="7 8 9">
    <location>
        <begin position="293"/>
        <end position="313"/>
    </location>
</feature>
<feature type="sequence conflict" description="In Ref. 1; AAC53569." evidence="10" ref="1">
    <original>V</original>
    <variation>A</variation>
    <location>
        <position position="5"/>
    </location>
</feature>
<feature type="sequence conflict" description="In Ref. 1; AAC53569." evidence="10" ref="1">
    <original>G</original>
    <variation>R</variation>
    <location>
        <position position="62"/>
    </location>
</feature>
<feature type="sequence conflict" description="In Ref. 5; BAB24743." evidence="10" ref="5">
    <original>ALGK</original>
    <variation>NTAL</variation>
    <location>
        <begin position="127"/>
        <end position="130"/>
    </location>
</feature>
<feature type="sequence conflict" description="In Ref. 1." evidence="10" ref="1">
    <original>Q</original>
    <variation>QA</variation>
    <location>
        <position position="254"/>
    </location>
</feature>
<feature type="sequence conflict" description="In Ref. 1." evidence="10" ref="1">
    <original>G</original>
    <variation>D</variation>
    <location>
        <position position="261"/>
    </location>
</feature>
<feature type="sequence conflict" description="In Ref. 1." evidence="10" ref="1">
    <original>L</original>
    <variation>Q</variation>
    <location>
        <position position="266"/>
    </location>
</feature>
<feature type="sequence conflict" description="In Ref. 1." evidence="10" ref="1">
    <original>AL</original>
    <variation>PM</variation>
    <location>
        <begin position="271"/>
        <end position="272"/>
    </location>
</feature>
<feature type="sequence conflict" description="In Ref. 6." evidence="10" ref="6">
    <original>D</original>
    <variation>G</variation>
    <location>
        <position position="314"/>
    </location>
</feature>
<feature type="sequence conflict" description="In Ref. 1; AAC53569." evidence="10" ref="1">
    <location>
        <position position="334"/>
    </location>
</feature>
<feature type="sequence conflict" description="In Ref. 1; AAC53569." evidence="10" ref="1">
    <original>I</original>
    <variation>T</variation>
    <location>
        <position position="538"/>
    </location>
</feature>
<feature type="sequence conflict" description="In Ref. 1; AAC53569." evidence="10" ref="1">
    <original>L</original>
    <variation>C</variation>
    <location>
        <position position="607"/>
    </location>
</feature>
<feature type="sequence conflict" description="In Ref. 1; AAC53569." evidence="10" ref="1">
    <original>P</original>
    <variation>L</variation>
    <location>
        <position position="621"/>
    </location>
</feature>
<feature type="sequence conflict" description="In Ref. 2; AAC02990/AAC02991." evidence="10" ref="2">
    <original>P</original>
    <variation>L</variation>
    <location>
        <position position="691"/>
    </location>
</feature>
<feature type="sequence conflict" description="In Ref. 1; AAC53569." evidence="10" ref="1">
    <original>A</original>
    <variation>T</variation>
    <location>
        <position position="748"/>
    </location>
</feature>
<feature type="sequence conflict" description="In Ref. 5; BAB28803." evidence="10" ref="5">
    <original>R</original>
    <variation>IFLSG</variation>
    <location>
        <position position="826"/>
    </location>
</feature>
<feature type="sequence conflict" description="In Ref. 5; BAB28803." evidence="10" ref="5">
    <original>E</original>
    <variation>Q</variation>
    <location>
        <position position="966"/>
    </location>
</feature>
<feature type="helix" evidence="13">
    <location>
        <begin position="733"/>
        <end position="749"/>
    </location>
</feature>
<feature type="helix" evidence="13">
    <location>
        <begin position="759"/>
        <end position="764"/>
    </location>
</feature>
<feature type="turn" evidence="13">
    <location>
        <begin position="766"/>
        <end position="768"/>
    </location>
</feature>
<feature type="strand" evidence="13">
    <location>
        <begin position="769"/>
        <end position="773"/>
    </location>
</feature>
<feature type="turn" evidence="13">
    <location>
        <begin position="783"/>
        <end position="785"/>
    </location>
</feature>
<feature type="helix" evidence="13">
    <location>
        <begin position="788"/>
        <end position="796"/>
    </location>
</feature>
<feature type="turn" evidence="13">
    <location>
        <begin position="797"/>
        <end position="800"/>
    </location>
</feature>
<feature type="strand" evidence="13">
    <location>
        <begin position="802"/>
        <end position="806"/>
    </location>
</feature>
<feature type="helix" evidence="13">
    <location>
        <begin position="808"/>
        <end position="810"/>
    </location>
</feature>
<feature type="helix" evidence="13">
    <location>
        <begin position="812"/>
        <end position="817"/>
    </location>
</feature>
<dbReference type="EMBL" id="AF017085">
    <property type="protein sequence ID" value="AAC53569.1"/>
    <property type="molecule type" value="mRNA"/>
</dbReference>
<dbReference type="EMBL" id="AF043219">
    <property type="protein sequence ID" value="AAC02990.1"/>
    <property type="molecule type" value="mRNA"/>
</dbReference>
<dbReference type="EMBL" id="AF043220">
    <property type="protein sequence ID" value="AAC02991.1"/>
    <property type="molecule type" value="mRNA"/>
</dbReference>
<dbReference type="EMBL" id="AF325177">
    <property type="status" value="NOT_ANNOTATED_CDS"/>
    <property type="molecule type" value="Genomic_DNA"/>
</dbReference>
<dbReference type="EMBL" id="AY030290">
    <property type="protein sequence ID" value="AAK49785.1"/>
    <property type="molecule type" value="mRNA"/>
</dbReference>
<dbReference type="EMBL" id="AY030291">
    <property type="protein sequence ID" value="AAK49786.1"/>
    <property type="molecule type" value="mRNA"/>
</dbReference>
<dbReference type="EMBL" id="AY030292">
    <property type="protein sequence ID" value="AAK49787.1"/>
    <property type="molecule type" value="mRNA"/>
</dbReference>
<dbReference type="EMBL" id="AY030293">
    <property type="protein sequence ID" value="AAK49788.1"/>
    <property type="molecule type" value="mRNA"/>
</dbReference>
<dbReference type="EMBL" id="BC053044">
    <property type="protein sequence ID" value="AAH53044.1"/>
    <property type="molecule type" value="mRNA"/>
</dbReference>
<dbReference type="EMBL" id="AK006796">
    <property type="protein sequence ID" value="BAB24743.1"/>
    <property type="molecule type" value="mRNA"/>
</dbReference>
<dbReference type="EMBL" id="AK013348">
    <property type="protein sequence ID" value="BAB28803.2"/>
    <property type="status" value="ALT_INIT"/>
    <property type="molecule type" value="mRNA"/>
</dbReference>
<dbReference type="EMBL" id="AF289666">
    <property type="protein sequence ID" value="AAF99338.1"/>
    <property type="molecule type" value="Genomic_DNA"/>
</dbReference>
<dbReference type="CCDS" id="CCDS39299.1">
    <molecule id="Q9ESZ8-2"/>
</dbReference>
<dbReference type="CCDS" id="CCDS39300.1">
    <molecule id="Q9ESZ8-6"/>
</dbReference>
<dbReference type="CCDS" id="CCDS39301.1">
    <molecule id="Q9ESZ8-1"/>
</dbReference>
<dbReference type="CCDS" id="CCDS57386.1">
    <molecule id="Q9ESZ8-4"/>
</dbReference>
<dbReference type="PIR" id="T03763">
    <property type="entry name" value="T03763"/>
</dbReference>
<dbReference type="RefSeq" id="NP_001074215.1">
    <molecule id="Q9ESZ8-1"/>
    <property type="nucleotide sequence ID" value="NM_001080746.2"/>
</dbReference>
<dbReference type="RefSeq" id="NP_001074216.1">
    <molecule id="Q9ESZ8-6"/>
    <property type="nucleotide sequence ID" value="NM_001080747.2"/>
</dbReference>
<dbReference type="RefSeq" id="NP_001074217.1">
    <molecule id="Q9ESZ8-4"/>
    <property type="nucleotide sequence ID" value="NM_001080748.2"/>
</dbReference>
<dbReference type="RefSeq" id="NP_001345991.1">
    <molecule id="Q9ESZ8-1"/>
    <property type="nucleotide sequence ID" value="NM_001359062.1"/>
</dbReference>
<dbReference type="RefSeq" id="NP_001345992.1">
    <molecule id="Q9ESZ8-2"/>
    <property type="nucleotide sequence ID" value="NM_001359063.1"/>
</dbReference>
<dbReference type="RefSeq" id="NP_001345993.1">
    <molecule id="Q9ESZ8-2"/>
    <property type="nucleotide sequence ID" value="NM_001359064.1"/>
</dbReference>
<dbReference type="RefSeq" id="NP_001345994.1">
    <molecule id="Q9ESZ8-6"/>
    <property type="nucleotide sequence ID" value="NM_001359065.1"/>
</dbReference>
<dbReference type="RefSeq" id="NP_001345995.1">
    <molecule id="Q9ESZ8-4"/>
    <property type="nucleotide sequence ID" value="NM_001359066.1"/>
</dbReference>
<dbReference type="RefSeq" id="NP_001345996.1">
    <molecule id="Q9ESZ8-4"/>
    <property type="nucleotide sequence ID" value="NM_001359067.1"/>
</dbReference>
<dbReference type="RefSeq" id="NP_034495.2">
    <molecule id="Q9ESZ8-2"/>
    <property type="nucleotide sequence ID" value="NM_010365.4"/>
</dbReference>
<dbReference type="RefSeq" id="XP_017176169.1">
    <property type="nucleotide sequence ID" value="XM_017320680.1"/>
</dbReference>
<dbReference type="RefSeq" id="XP_017176170.1">
    <molecule id="Q9ESZ8-4"/>
    <property type="nucleotide sequence ID" value="XM_017320681.3"/>
</dbReference>
<dbReference type="PDB" id="1Q60">
    <property type="method" value="NMR"/>
    <property type="chains" value="A=733-818"/>
</dbReference>
<dbReference type="PDBsum" id="1Q60"/>
<dbReference type="SMR" id="Q9ESZ8"/>
<dbReference type="BioGRID" id="200113">
    <property type="interactions" value="16"/>
</dbReference>
<dbReference type="FunCoup" id="Q9ESZ8">
    <property type="interactions" value="4069"/>
</dbReference>
<dbReference type="IntAct" id="Q9ESZ8">
    <property type="interactions" value="6"/>
</dbReference>
<dbReference type="MINT" id="Q9ESZ8"/>
<dbReference type="STRING" id="10090.ENSMUSP00000049625"/>
<dbReference type="GlyGen" id="Q9ESZ8">
    <property type="glycosylation" value="1 site, 1 O-linked glycan (1 site)"/>
</dbReference>
<dbReference type="iPTMnet" id="Q9ESZ8"/>
<dbReference type="PhosphoSitePlus" id="Q9ESZ8"/>
<dbReference type="SwissPalm" id="Q9ESZ8"/>
<dbReference type="jPOST" id="Q9ESZ8"/>
<dbReference type="PaxDb" id="10090-ENSMUSP00000049625"/>
<dbReference type="PeptideAtlas" id="Q9ESZ8"/>
<dbReference type="ProteomicsDB" id="271483">
    <molecule id="Q9ESZ8-1"/>
</dbReference>
<dbReference type="ProteomicsDB" id="271484">
    <molecule id="Q9ESZ8-2"/>
</dbReference>
<dbReference type="ProteomicsDB" id="271485">
    <molecule id="Q9ESZ8-3"/>
</dbReference>
<dbReference type="ProteomicsDB" id="271486">
    <molecule id="Q9ESZ8-4"/>
</dbReference>
<dbReference type="ProteomicsDB" id="271487">
    <molecule id="Q9ESZ8-5"/>
</dbReference>
<dbReference type="ProteomicsDB" id="271488">
    <molecule id="Q9ESZ8-6"/>
</dbReference>
<dbReference type="Pumba" id="Q9ESZ8"/>
<dbReference type="Antibodypedia" id="73029">
    <property type="antibodies" value="447 antibodies from 35 providers"/>
</dbReference>
<dbReference type="DNASU" id="14886"/>
<dbReference type="Ensembl" id="ENSMUST00000059042.15">
    <molecule id="Q9ESZ8-1"/>
    <property type="protein sequence ID" value="ENSMUSP00000049625.8"/>
    <property type="gene ID" value="ENSMUSG00000060261.17"/>
</dbReference>
<dbReference type="Ensembl" id="ENSMUST00000082057.10">
    <molecule id="Q9ESZ8-6"/>
    <property type="protein sequence ID" value="ENSMUSP00000080714.4"/>
    <property type="gene ID" value="ENSMUSG00000060261.17"/>
</dbReference>
<dbReference type="Ensembl" id="ENSMUST00000111261.12">
    <molecule id="Q9ESZ8-2"/>
    <property type="protein sequence ID" value="ENSMUSP00000106892.5"/>
    <property type="gene ID" value="ENSMUSG00000060261.17"/>
</dbReference>
<dbReference type="Ensembl" id="ENSMUST00000173888.8">
    <molecule id="Q9ESZ8-5"/>
    <property type="protein sequence ID" value="ENSMUSP00000133969.2"/>
    <property type="gene ID" value="ENSMUSG00000060261.17"/>
</dbReference>
<dbReference type="Ensembl" id="ENSMUST00000174155.8">
    <molecule id="Q9ESZ8-1"/>
    <property type="protein sequence ID" value="ENSMUSP00000133566.2"/>
    <property type="gene ID" value="ENSMUSG00000060261.17"/>
</dbReference>
<dbReference type="Ensembl" id="ENSMUST00000174354.8">
    <molecule id="Q9ESZ8-2"/>
    <property type="protein sequence ID" value="ENSMUSP00000134440.2"/>
    <property type="gene ID" value="ENSMUSG00000060261.17"/>
</dbReference>
<dbReference type="Ensembl" id="ENSMUST00000174513.8">
    <molecule id="Q9ESZ8-4"/>
    <property type="protein sequence ID" value="ENSMUSP00000133489.2"/>
    <property type="gene ID" value="ENSMUSG00000060261.17"/>
</dbReference>
<dbReference type="Ensembl" id="ENSMUST00000174772.8">
    <molecule id="Q9ESZ8-6"/>
    <property type="protein sequence ID" value="ENSMUSP00000133740.2"/>
    <property type="gene ID" value="ENSMUSG00000060261.17"/>
</dbReference>
<dbReference type="GeneID" id="14886"/>
<dbReference type="KEGG" id="mmu:14886"/>
<dbReference type="UCSC" id="uc008zvj.3">
    <molecule id="Q9ESZ8-1"/>
    <property type="organism name" value="mouse"/>
</dbReference>
<dbReference type="UCSC" id="uc008zvk.3">
    <molecule id="Q9ESZ8-2"/>
    <property type="organism name" value="mouse"/>
</dbReference>
<dbReference type="UCSC" id="uc008zvl.3">
    <molecule id="Q9ESZ8-6"/>
    <property type="organism name" value="mouse"/>
</dbReference>
<dbReference type="UCSC" id="uc008zvm.3">
    <molecule id="Q9ESZ8-4"/>
    <property type="organism name" value="mouse"/>
</dbReference>
<dbReference type="AGR" id="MGI:1202722"/>
<dbReference type="CTD" id="2969"/>
<dbReference type="MGI" id="MGI:1202722">
    <property type="gene designation" value="Gtf2i"/>
</dbReference>
<dbReference type="VEuPathDB" id="HostDB:ENSMUSG00000060261"/>
<dbReference type="eggNOG" id="ENOG502QWD0">
    <property type="taxonomic scope" value="Eukaryota"/>
</dbReference>
<dbReference type="GeneTree" id="ENSGT00940000160349"/>
<dbReference type="HOGENOM" id="CLU_011773_0_0_1"/>
<dbReference type="InParanoid" id="Q9ESZ8"/>
<dbReference type="OMA" id="TEAWNAK"/>
<dbReference type="OrthoDB" id="10072451at2759"/>
<dbReference type="PhylomeDB" id="Q9ESZ8"/>
<dbReference type="TreeFam" id="TF352524"/>
<dbReference type="BioGRID-ORCS" id="14886">
    <property type="hits" value="1 hit in 84 CRISPR screens"/>
</dbReference>
<dbReference type="ChiTaRS" id="Gtf2i">
    <property type="organism name" value="mouse"/>
</dbReference>
<dbReference type="EvolutionaryTrace" id="Q9ESZ8"/>
<dbReference type="PRO" id="PR:Q9ESZ8"/>
<dbReference type="Proteomes" id="UP000000589">
    <property type="component" value="Chromosome 5"/>
</dbReference>
<dbReference type="RNAct" id="Q9ESZ8">
    <property type="molecule type" value="protein"/>
</dbReference>
<dbReference type="Bgee" id="ENSMUSG00000060261">
    <property type="expression patterns" value="Expressed in utricle of membranous labyrinth and 285 other cell types or tissues"/>
</dbReference>
<dbReference type="ExpressionAtlas" id="Q9ESZ8">
    <property type="expression patterns" value="baseline and differential"/>
</dbReference>
<dbReference type="GO" id="GO:0042995">
    <property type="term" value="C:cell projection"/>
    <property type="evidence" value="ECO:0000314"/>
    <property type="project" value="MGI"/>
</dbReference>
<dbReference type="GO" id="GO:0005737">
    <property type="term" value="C:cytoplasm"/>
    <property type="evidence" value="ECO:0007669"/>
    <property type="project" value="UniProtKB-SubCell"/>
</dbReference>
<dbReference type="GO" id="GO:0043025">
    <property type="term" value="C:neuronal cell body"/>
    <property type="evidence" value="ECO:0000314"/>
    <property type="project" value="MGI"/>
</dbReference>
<dbReference type="GO" id="GO:0005654">
    <property type="term" value="C:nucleoplasm"/>
    <property type="evidence" value="ECO:0007669"/>
    <property type="project" value="Ensembl"/>
</dbReference>
<dbReference type="GO" id="GO:0005634">
    <property type="term" value="C:nucleus"/>
    <property type="evidence" value="ECO:0000314"/>
    <property type="project" value="MGI"/>
</dbReference>
<dbReference type="GO" id="GO:0003677">
    <property type="term" value="F:DNA binding"/>
    <property type="evidence" value="ECO:0007669"/>
    <property type="project" value="UniProtKB-KW"/>
</dbReference>
<dbReference type="GO" id="GO:0001228">
    <property type="term" value="F:DNA-binding transcription activator activity, RNA polymerase II-specific"/>
    <property type="evidence" value="ECO:0007669"/>
    <property type="project" value="Ensembl"/>
</dbReference>
<dbReference type="GO" id="GO:0051019">
    <property type="term" value="F:mitogen-activated protein kinase binding"/>
    <property type="evidence" value="ECO:0000314"/>
    <property type="project" value="MGI"/>
</dbReference>
<dbReference type="GO" id="GO:0061629">
    <property type="term" value="F:RNA polymerase II-specific DNA-binding transcription factor binding"/>
    <property type="evidence" value="ECO:0007669"/>
    <property type="project" value="Ensembl"/>
</dbReference>
<dbReference type="GO" id="GO:0016525">
    <property type="term" value="P:negative regulation of angiogenesis"/>
    <property type="evidence" value="ECO:0000266"/>
    <property type="project" value="MGI"/>
</dbReference>
<dbReference type="GO" id="GO:0006366">
    <property type="term" value="P:transcription by RNA polymerase II"/>
    <property type="evidence" value="ECO:0007669"/>
    <property type="project" value="InterPro"/>
</dbReference>
<dbReference type="GO" id="GO:0014886">
    <property type="term" value="P:transition between slow and fast fiber"/>
    <property type="evidence" value="ECO:0000314"/>
    <property type="project" value="MGI"/>
</dbReference>
<dbReference type="FunFam" id="3.90.1460.10:FF:000002">
    <property type="entry name" value="General transcription factor II-I isoform 1"/>
    <property type="match status" value="1"/>
</dbReference>
<dbReference type="FunFam" id="3.90.1460.10:FF:000001">
    <property type="entry name" value="general transcription factor II-I isoform X1"/>
    <property type="match status" value="3"/>
</dbReference>
<dbReference type="FunFam" id="3.90.1460.10:FF:000003">
    <property type="entry name" value="general transcription factor II-I isoform X1"/>
    <property type="match status" value="1"/>
</dbReference>
<dbReference type="FunFam" id="3.90.1460.10:FF:000004">
    <property type="entry name" value="general transcription factor II-I isoform X1"/>
    <property type="match status" value="1"/>
</dbReference>
<dbReference type="Gene3D" id="3.90.1460.10">
    <property type="entry name" value="GTF2I-like"/>
    <property type="match status" value="6"/>
</dbReference>
<dbReference type="InterPro" id="IPR004212">
    <property type="entry name" value="GTF2I"/>
</dbReference>
<dbReference type="InterPro" id="IPR036647">
    <property type="entry name" value="GTF2I-like_rpt_sf"/>
</dbReference>
<dbReference type="InterPro" id="IPR016659">
    <property type="entry name" value="TF_II-I"/>
</dbReference>
<dbReference type="PANTHER" id="PTHR46304:SF2">
    <property type="entry name" value="GENERAL TRANSCRIPTION FACTOR II-I"/>
    <property type="match status" value="1"/>
</dbReference>
<dbReference type="PANTHER" id="PTHR46304">
    <property type="entry name" value="GENERAL TRANSCRIPTION FACTOR II-I REPEAT DOMAIN-CONTAINING PROTEIN 1"/>
    <property type="match status" value="1"/>
</dbReference>
<dbReference type="Pfam" id="PF02946">
    <property type="entry name" value="GTF2I"/>
    <property type="match status" value="6"/>
</dbReference>
<dbReference type="PIRSF" id="PIRSF016441">
    <property type="entry name" value="TF_II-I"/>
    <property type="match status" value="1"/>
</dbReference>
<dbReference type="SUPFAM" id="SSF117773">
    <property type="entry name" value="GTF2I-like repeat"/>
    <property type="match status" value="6"/>
</dbReference>
<dbReference type="PROSITE" id="PS51139">
    <property type="entry name" value="GTF2I"/>
    <property type="match status" value="6"/>
</dbReference>